<name>UPPP_SACI4</name>
<accession>C3MWB6</accession>
<dbReference type="EC" id="3.6.1.27" evidence="1"/>
<dbReference type="EMBL" id="CP001400">
    <property type="protein sequence ID" value="ACP37574.1"/>
    <property type="molecule type" value="Genomic_DNA"/>
</dbReference>
<dbReference type="RefSeq" id="WP_012710845.1">
    <property type="nucleotide sequence ID" value="NC_012588.1"/>
</dbReference>
<dbReference type="SMR" id="C3MWB6"/>
<dbReference type="KEGG" id="sia:M1425_0759"/>
<dbReference type="HOGENOM" id="CLU_060296_1_2_2"/>
<dbReference type="Proteomes" id="UP000001350">
    <property type="component" value="Chromosome"/>
</dbReference>
<dbReference type="GO" id="GO:0005886">
    <property type="term" value="C:plasma membrane"/>
    <property type="evidence" value="ECO:0007669"/>
    <property type="project" value="UniProtKB-SubCell"/>
</dbReference>
<dbReference type="GO" id="GO:0050380">
    <property type="term" value="F:undecaprenyl-diphosphatase activity"/>
    <property type="evidence" value="ECO:0007669"/>
    <property type="project" value="UniProtKB-UniRule"/>
</dbReference>
<dbReference type="HAMAP" id="MF_01006">
    <property type="entry name" value="Undec_diphosphatase"/>
    <property type="match status" value="1"/>
</dbReference>
<dbReference type="InterPro" id="IPR003824">
    <property type="entry name" value="UppP"/>
</dbReference>
<dbReference type="NCBIfam" id="NF001398">
    <property type="entry name" value="PRK00281.3-5"/>
    <property type="match status" value="1"/>
</dbReference>
<dbReference type="PANTHER" id="PTHR30622">
    <property type="entry name" value="UNDECAPRENYL-DIPHOSPHATASE"/>
    <property type="match status" value="1"/>
</dbReference>
<dbReference type="PANTHER" id="PTHR30622:SF2">
    <property type="entry name" value="UNDECAPRENYL-DIPHOSPHATASE"/>
    <property type="match status" value="1"/>
</dbReference>
<dbReference type="Pfam" id="PF02673">
    <property type="entry name" value="BacA"/>
    <property type="match status" value="1"/>
</dbReference>
<feature type="chain" id="PRO_1000213158" description="Undecaprenyl-diphosphatase">
    <location>
        <begin position="1"/>
        <end position="278"/>
    </location>
</feature>
<feature type="transmembrane region" description="Helical" evidence="1">
    <location>
        <begin position="3"/>
        <end position="23"/>
    </location>
</feature>
<feature type="transmembrane region" description="Helical" evidence="1">
    <location>
        <begin position="42"/>
        <end position="62"/>
    </location>
</feature>
<feature type="transmembrane region" description="Helical" evidence="1">
    <location>
        <begin position="88"/>
        <end position="108"/>
    </location>
</feature>
<feature type="transmembrane region" description="Helical" evidence="1">
    <location>
        <begin position="112"/>
        <end position="132"/>
    </location>
</feature>
<feature type="transmembrane region" description="Helical" evidence="1">
    <location>
        <begin position="152"/>
        <end position="172"/>
    </location>
</feature>
<feature type="transmembrane region" description="Helical" evidence="1">
    <location>
        <begin position="190"/>
        <end position="210"/>
    </location>
</feature>
<feature type="transmembrane region" description="Helical" evidence="1">
    <location>
        <begin position="225"/>
        <end position="245"/>
    </location>
</feature>
<feature type="transmembrane region" description="Helical" evidence="1">
    <location>
        <begin position="253"/>
        <end position="273"/>
    </location>
</feature>
<protein>
    <recommendedName>
        <fullName evidence="1">Undecaprenyl-diphosphatase</fullName>
        <ecNumber evidence="1">3.6.1.27</ecNumber>
    </recommendedName>
    <alternativeName>
        <fullName evidence="1">Undecaprenyl pyrophosphate phosphatase</fullName>
    </alternativeName>
</protein>
<keyword id="KW-1003">Cell membrane</keyword>
<keyword id="KW-0378">Hydrolase</keyword>
<keyword id="KW-0472">Membrane</keyword>
<keyword id="KW-0812">Transmembrane</keyword>
<keyword id="KW-1133">Transmembrane helix</keyword>
<reference key="1">
    <citation type="journal article" date="2009" name="Proc. Natl. Acad. Sci. U.S.A.">
        <title>Biogeography of the Sulfolobus islandicus pan-genome.</title>
        <authorList>
            <person name="Reno M.L."/>
            <person name="Held N.L."/>
            <person name="Fields C.J."/>
            <person name="Burke P.V."/>
            <person name="Whitaker R.J."/>
        </authorList>
    </citation>
    <scope>NUCLEOTIDE SEQUENCE [LARGE SCALE GENOMIC DNA]</scope>
    <source>
        <strain>M.14.25 / Kamchatka #1</strain>
    </source>
</reference>
<sequence>MDYILIGVILGIVQGISEWIPISSKTQVLIVSSSLLGLSFSVAYSFGLFMEIGTIAAAIIYFRREISGLLKALVRMSSRREDYLLLKFLVIVTIITGLMGVPLYLFVISLPILGLPMTVLGVVLLTDGIIIYLSRKNYISRKGLHDLRLRDIIIVGIAQGLAALPGVSRSGITTSALILLGVKPEEAFKLSFISLIPAALGAIGVTVLFSKHEVSQAVHSVSLSGLLISIVVATFVSIFFINALLRFARTNKVVVLVIILGIIAIISGILSGIAKGFY</sequence>
<organism>
    <name type="scientific">Saccharolobus islandicus (strain M.14.25 / Kamchatka #1)</name>
    <name type="common">Sulfolobus islandicus</name>
    <dbReference type="NCBI Taxonomy" id="427317"/>
    <lineage>
        <taxon>Archaea</taxon>
        <taxon>Thermoproteota</taxon>
        <taxon>Thermoprotei</taxon>
        <taxon>Sulfolobales</taxon>
        <taxon>Sulfolobaceae</taxon>
        <taxon>Saccharolobus</taxon>
    </lineage>
</organism>
<comment type="function">
    <text evidence="1">Catalyzes the dephosphorylation of undecaprenyl diphosphate (UPP).</text>
</comment>
<comment type="catalytic activity">
    <reaction evidence="1">
        <text>di-trans,octa-cis-undecaprenyl diphosphate + H2O = di-trans,octa-cis-undecaprenyl phosphate + phosphate + H(+)</text>
        <dbReference type="Rhea" id="RHEA:28094"/>
        <dbReference type="ChEBI" id="CHEBI:15377"/>
        <dbReference type="ChEBI" id="CHEBI:15378"/>
        <dbReference type="ChEBI" id="CHEBI:43474"/>
        <dbReference type="ChEBI" id="CHEBI:58405"/>
        <dbReference type="ChEBI" id="CHEBI:60392"/>
        <dbReference type="EC" id="3.6.1.27"/>
    </reaction>
</comment>
<comment type="subcellular location">
    <subcellularLocation>
        <location evidence="1">Cell membrane</location>
        <topology evidence="1">Multi-pass membrane protein</topology>
    </subcellularLocation>
</comment>
<comment type="similarity">
    <text evidence="1">Belongs to the UppP family.</text>
</comment>
<proteinExistence type="inferred from homology"/>
<evidence type="ECO:0000255" key="1">
    <source>
        <dbReference type="HAMAP-Rule" id="MF_01006"/>
    </source>
</evidence>
<gene>
    <name evidence="1" type="primary">uppP</name>
    <name type="ordered locus">M1425_0759</name>
</gene>